<keyword id="KW-0143">Chaperone</keyword>
<keyword id="KW-0963">Cytoplasm</keyword>
<keyword id="KW-0996">Nickel insertion</keyword>
<keyword id="KW-1185">Reference proteome</keyword>
<proteinExistence type="inferred from homology"/>
<comment type="function">
    <text evidence="1">Required for maturation of urease via the functional incorporation of the urease nickel metallocenter.</text>
</comment>
<comment type="subunit">
    <text evidence="1">UreD, UreF and UreG form a complex that acts as a GTP-hydrolysis-dependent molecular chaperone, activating the urease apoprotein by helping to assemble the nickel containing metallocenter of UreC. The UreE protein probably delivers the nickel.</text>
</comment>
<comment type="subcellular location">
    <subcellularLocation>
        <location evidence="1">Cytoplasm</location>
    </subcellularLocation>
</comment>
<comment type="similarity">
    <text evidence="1">Belongs to the UreD family.</text>
</comment>
<reference key="1">
    <citation type="journal article" date="1995" name="Science">
        <title>Whole-genome random sequencing and assembly of Haemophilus influenzae Rd.</title>
        <authorList>
            <person name="Fleischmann R.D."/>
            <person name="Adams M.D."/>
            <person name="White O."/>
            <person name="Clayton R.A."/>
            <person name="Kirkness E.F."/>
            <person name="Kerlavage A.R."/>
            <person name="Bult C.J."/>
            <person name="Tomb J.-F."/>
            <person name="Dougherty B.A."/>
            <person name="Merrick J.M."/>
            <person name="McKenney K."/>
            <person name="Sutton G.G."/>
            <person name="FitzHugh W."/>
            <person name="Fields C.A."/>
            <person name="Gocayne J.D."/>
            <person name="Scott J.D."/>
            <person name="Shirley R."/>
            <person name="Liu L.-I."/>
            <person name="Glodek A."/>
            <person name="Kelley J.M."/>
            <person name="Weidman J.F."/>
            <person name="Phillips C.A."/>
            <person name="Spriggs T."/>
            <person name="Hedblom E."/>
            <person name="Cotton M.D."/>
            <person name="Utterback T.R."/>
            <person name="Hanna M.C."/>
            <person name="Nguyen D.T."/>
            <person name="Saudek D.M."/>
            <person name="Brandon R.C."/>
            <person name="Fine L.D."/>
            <person name="Fritchman J.L."/>
            <person name="Fuhrmann J.L."/>
            <person name="Geoghagen N.S.M."/>
            <person name="Gnehm C.L."/>
            <person name="McDonald L.A."/>
            <person name="Small K.V."/>
            <person name="Fraser C.M."/>
            <person name="Smith H.O."/>
            <person name="Venter J.C."/>
        </authorList>
    </citation>
    <scope>NUCLEOTIDE SEQUENCE [LARGE SCALE GENOMIC DNA]</scope>
    <source>
        <strain>ATCC 51907 / DSM 11121 / KW20 / Rd</strain>
    </source>
</reference>
<gene>
    <name evidence="1" type="primary">ureD</name>
    <name type="synonym">ureH</name>
    <name type="ordered locus">HI_0535</name>
</gene>
<feature type="chain" id="PRO_0000067623" description="Urease accessory protein UreD">
    <location>
        <begin position="1"/>
        <end position="261"/>
    </location>
</feature>
<organism>
    <name type="scientific">Haemophilus influenzae (strain ATCC 51907 / DSM 11121 / KW20 / Rd)</name>
    <dbReference type="NCBI Taxonomy" id="71421"/>
    <lineage>
        <taxon>Bacteria</taxon>
        <taxon>Pseudomonadati</taxon>
        <taxon>Pseudomonadota</taxon>
        <taxon>Gammaproteobacteria</taxon>
        <taxon>Pasteurellales</taxon>
        <taxon>Pasteurellaceae</taxon>
        <taxon>Haemophilus</taxon>
    </lineage>
</organism>
<protein>
    <recommendedName>
        <fullName evidence="1">Urease accessory protein UreD</fullName>
    </recommendedName>
</protein>
<accession>P44397</accession>
<sequence>MNSKLSLSTKLSSSGKTQLAEYFATPPFKVITLPSYDDAWANGLNAMQMSSSPGVLAGDLLEIDISLAKLTALSLNTQAFTRVQAMNEGDSAMQTTHILLAENSRLFYLPHPLVLHRDSVFKQQTQIEMGEQSELIYGEIVAIGRVLNDERFAFRQFSSHLKIYALQNDGKKRPLVSDCIQWLPSKMNLTALSQMENYSHQGSLTYLNLAKNNAEIKQQVQALQQQSTEEKDLLIGISQLNEYGLMVRVLGCRAEANSEII</sequence>
<evidence type="ECO:0000255" key="1">
    <source>
        <dbReference type="HAMAP-Rule" id="MF_01384"/>
    </source>
</evidence>
<dbReference type="EMBL" id="L42023">
    <property type="protein sequence ID" value="AAC22193.1"/>
    <property type="molecule type" value="Genomic_DNA"/>
</dbReference>
<dbReference type="PIR" id="D64075">
    <property type="entry name" value="D64075"/>
</dbReference>
<dbReference type="RefSeq" id="NP_438693.1">
    <property type="nucleotide sequence ID" value="NC_000907.1"/>
</dbReference>
<dbReference type="SMR" id="P44397"/>
<dbReference type="STRING" id="71421.HI_0535"/>
<dbReference type="DNASU" id="949674"/>
<dbReference type="EnsemblBacteria" id="AAC22193">
    <property type="protein sequence ID" value="AAC22193"/>
    <property type="gene ID" value="HI_0535"/>
</dbReference>
<dbReference type="KEGG" id="hin:HI_0535"/>
<dbReference type="PATRIC" id="fig|71421.8.peg.554"/>
<dbReference type="eggNOG" id="COG0829">
    <property type="taxonomic scope" value="Bacteria"/>
</dbReference>
<dbReference type="HOGENOM" id="CLU_056339_6_0_6"/>
<dbReference type="OrthoDB" id="9807968at2"/>
<dbReference type="PhylomeDB" id="P44397"/>
<dbReference type="BioCyc" id="HINF71421:G1GJ1-548-MONOMER"/>
<dbReference type="Proteomes" id="UP000000579">
    <property type="component" value="Chromosome"/>
</dbReference>
<dbReference type="GO" id="GO:0005737">
    <property type="term" value="C:cytoplasm"/>
    <property type="evidence" value="ECO:0007669"/>
    <property type="project" value="UniProtKB-SubCell"/>
</dbReference>
<dbReference type="GO" id="GO:0016151">
    <property type="term" value="F:nickel cation binding"/>
    <property type="evidence" value="ECO:0007669"/>
    <property type="project" value="UniProtKB-UniRule"/>
</dbReference>
<dbReference type="HAMAP" id="MF_01384">
    <property type="entry name" value="UreD"/>
    <property type="match status" value="1"/>
</dbReference>
<dbReference type="InterPro" id="IPR002669">
    <property type="entry name" value="UreD"/>
</dbReference>
<dbReference type="PANTHER" id="PTHR33643">
    <property type="entry name" value="UREASE ACCESSORY PROTEIN D"/>
    <property type="match status" value="1"/>
</dbReference>
<dbReference type="PANTHER" id="PTHR33643:SF1">
    <property type="entry name" value="UREASE ACCESSORY PROTEIN D"/>
    <property type="match status" value="1"/>
</dbReference>
<dbReference type="Pfam" id="PF01774">
    <property type="entry name" value="UreD"/>
    <property type="match status" value="1"/>
</dbReference>
<name>URED_HAEIN</name>